<feature type="signal peptide" evidence="2">
    <location>
        <begin position="1"/>
        <end position="18"/>
    </location>
</feature>
<feature type="propeptide" id="PRO_0000417004" evidence="1">
    <location>
        <begin position="19"/>
        <end position="56"/>
    </location>
</feature>
<feature type="chain" id="PRO_0000417005" description="Snake venom serine protease NaSP">
    <location>
        <begin position="57"/>
        <end position="282" status="greater than"/>
    </location>
</feature>
<feature type="domain" description="Peptidase S1" evidence="3">
    <location>
        <begin position="57"/>
        <end position="280"/>
    </location>
</feature>
<feature type="active site" description="Charge relay system" evidence="1">
    <location>
        <position position="97"/>
    </location>
</feature>
<feature type="active site" description="Charge relay system" evidence="1">
    <location>
        <position position="142"/>
    </location>
</feature>
<feature type="active site" description="Charge relay system" evidence="1">
    <location>
        <position position="235"/>
    </location>
</feature>
<feature type="glycosylation site" description="N-linked (GlcNAc...) asparagine" evidence="2">
    <location>
        <position position="41"/>
    </location>
</feature>
<feature type="glycosylation site" description="N-linked (GlcNAc...) asparagine" evidence="2">
    <location>
        <position position="45"/>
    </location>
</feature>
<feature type="glycosylation site" description="N-linked (GlcNAc...) asparagine" evidence="2">
    <location>
        <position position="135"/>
    </location>
</feature>
<feature type="glycosylation site" description="N-linked (GlcNAc...) asparagine" evidence="2">
    <location>
        <position position="149"/>
    </location>
</feature>
<feature type="glycosylation site" description="N-linked (GlcNAc...) asparagine" evidence="2">
    <location>
        <position position="153"/>
    </location>
</feature>
<feature type="disulfide bond" evidence="3">
    <location>
        <begin position="63"/>
        <end position="195"/>
    </location>
</feature>
<feature type="disulfide bond" evidence="3">
    <location>
        <begin position="82"/>
        <end position="98"/>
    </location>
</feature>
<feature type="disulfide bond" evidence="3">
    <location>
        <begin position="174"/>
        <end position="241"/>
    </location>
</feature>
<feature type="disulfide bond" evidence="3">
    <location>
        <begin position="206"/>
        <end position="220"/>
    </location>
</feature>
<feature type="disulfide bond" evidence="3">
    <location>
        <begin position="231"/>
        <end position="256"/>
    </location>
</feature>
<feature type="non-terminal residue">
    <location>
        <position position="282"/>
    </location>
</feature>
<evidence type="ECO:0000250" key="1"/>
<evidence type="ECO:0000255" key="2"/>
<evidence type="ECO:0000255" key="3">
    <source>
        <dbReference type="PROSITE-ProRule" id="PRU00274"/>
    </source>
</evidence>
<accession>A8QL53</accession>
<dbReference type="EC" id="3.4.21.-"/>
<dbReference type="EMBL" id="EF080834">
    <property type="protein sequence ID" value="ABN72541.1"/>
    <property type="molecule type" value="mRNA"/>
</dbReference>
<dbReference type="SMR" id="A8QL53"/>
<dbReference type="MEROPS" id="S01.481"/>
<dbReference type="GO" id="GO:0005576">
    <property type="term" value="C:extracellular region"/>
    <property type="evidence" value="ECO:0007669"/>
    <property type="project" value="UniProtKB-SubCell"/>
</dbReference>
<dbReference type="GO" id="GO:0030141">
    <property type="term" value="C:secretory granule"/>
    <property type="evidence" value="ECO:0007669"/>
    <property type="project" value="TreeGrafter"/>
</dbReference>
<dbReference type="GO" id="GO:0004252">
    <property type="term" value="F:serine-type endopeptidase activity"/>
    <property type="evidence" value="ECO:0007669"/>
    <property type="project" value="InterPro"/>
</dbReference>
<dbReference type="GO" id="GO:0090729">
    <property type="term" value="F:toxin activity"/>
    <property type="evidence" value="ECO:0007669"/>
    <property type="project" value="UniProtKB-KW"/>
</dbReference>
<dbReference type="GO" id="GO:0006508">
    <property type="term" value="P:proteolysis"/>
    <property type="evidence" value="ECO:0007669"/>
    <property type="project" value="UniProtKB-KW"/>
</dbReference>
<dbReference type="CDD" id="cd00190">
    <property type="entry name" value="Tryp_SPc"/>
    <property type="match status" value="1"/>
</dbReference>
<dbReference type="FunFam" id="2.40.10.10:FF:000010">
    <property type="entry name" value="Kallikrein related peptidase 11"/>
    <property type="match status" value="1"/>
</dbReference>
<dbReference type="Gene3D" id="2.40.10.10">
    <property type="entry name" value="Trypsin-like serine proteases"/>
    <property type="match status" value="2"/>
</dbReference>
<dbReference type="InterPro" id="IPR009003">
    <property type="entry name" value="Peptidase_S1_PA"/>
</dbReference>
<dbReference type="InterPro" id="IPR043504">
    <property type="entry name" value="Peptidase_S1_PA_chymotrypsin"/>
</dbReference>
<dbReference type="InterPro" id="IPR001314">
    <property type="entry name" value="Peptidase_S1A"/>
</dbReference>
<dbReference type="InterPro" id="IPR001254">
    <property type="entry name" value="Trypsin_dom"/>
</dbReference>
<dbReference type="InterPro" id="IPR018114">
    <property type="entry name" value="TRYPSIN_HIS"/>
</dbReference>
<dbReference type="InterPro" id="IPR033116">
    <property type="entry name" value="TRYPSIN_SER"/>
</dbReference>
<dbReference type="PANTHER" id="PTHR24271:SF47">
    <property type="entry name" value="KALLIKREIN-1"/>
    <property type="match status" value="1"/>
</dbReference>
<dbReference type="PANTHER" id="PTHR24271">
    <property type="entry name" value="KALLIKREIN-RELATED"/>
    <property type="match status" value="1"/>
</dbReference>
<dbReference type="Pfam" id="PF00089">
    <property type="entry name" value="Trypsin"/>
    <property type="match status" value="1"/>
</dbReference>
<dbReference type="PRINTS" id="PR00722">
    <property type="entry name" value="CHYMOTRYPSIN"/>
</dbReference>
<dbReference type="SMART" id="SM00020">
    <property type="entry name" value="Tryp_SPc"/>
    <property type="match status" value="1"/>
</dbReference>
<dbReference type="SUPFAM" id="SSF50494">
    <property type="entry name" value="Trypsin-like serine proteases"/>
    <property type="match status" value="1"/>
</dbReference>
<dbReference type="PROSITE" id="PS50240">
    <property type="entry name" value="TRYPSIN_DOM"/>
    <property type="match status" value="1"/>
</dbReference>
<dbReference type="PROSITE" id="PS00134">
    <property type="entry name" value="TRYPSIN_HIS"/>
    <property type="match status" value="1"/>
</dbReference>
<dbReference type="PROSITE" id="PS00135">
    <property type="entry name" value="TRYPSIN_SER"/>
    <property type="match status" value="1"/>
</dbReference>
<name>VSP1_NAJAT</name>
<sequence>MVLIRVLASLLILQLSYSKSLDDGAKESAYDDEIQQSSWGNSTVNTTLTETVVIQLIMGGSECYKSKHPFLVYLYNSAGFFCSGTLLNHEWVLTAAHCNRDDIQLKLGVHNVHVHYEDEQIRVPKEKLCCLSTKNCTQWSQDIMLIRLNSSVNNSKHIEPLSLPSRPPSMGSDCTVMGWGTITSPKVTYPKVPHCVDIKILHNPVCQAAYPTMSRKNILCAGVLEGGKDSCKGDSGGPLICDGQIQGIVSWGRFPCAQLLEPGVYTKVFDYIDWIRGIIAGN</sequence>
<protein>
    <recommendedName>
        <fullName>Snake venom serine protease NaSP</fullName>
        <shortName>SVSP</shortName>
        <ecNumber>3.4.21.-</ecNumber>
    </recommendedName>
</protein>
<organism>
    <name type="scientific">Naja atra</name>
    <name type="common">Chinese cobra</name>
    <dbReference type="NCBI Taxonomy" id="8656"/>
    <lineage>
        <taxon>Eukaryota</taxon>
        <taxon>Metazoa</taxon>
        <taxon>Chordata</taxon>
        <taxon>Craniata</taxon>
        <taxon>Vertebrata</taxon>
        <taxon>Euteleostomi</taxon>
        <taxon>Lepidosauria</taxon>
        <taxon>Squamata</taxon>
        <taxon>Bifurcata</taxon>
        <taxon>Unidentata</taxon>
        <taxon>Episquamata</taxon>
        <taxon>Toxicofera</taxon>
        <taxon>Serpentes</taxon>
        <taxon>Colubroidea</taxon>
        <taxon>Elapidae</taxon>
        <taxon>Elapinae</taxon>
        <taxon>Naja</taxon>
    </lineage>
</organism>
<keyword id="KW-1015">Disulfide bond</keyword>
<keyword id="KW-0325">Glycoprotein</keyword>
<keyword id="KW-1199">Hemostasis impairing toxin</keyword>
<keyword id="KW-0378">Hydrolase</keyword>
<keyword id="KW-0645">Protease</keyword>
<keyword id="KW-0964">Secreted</keyword>
<keyword id="KW-0720">Serine protease</keyword>
<keyword id="KW-0732">Signal</keyword>
<keyword id="KW-0800">Toxin</keyword>
<comment type="function">
    <text evidence="1">Snake venom serine protease that may act in the hemostasis system of the prey.</text>
</comment>
<comment type="subunit">
    <text evidence="1">Monomer.</text>
</comment>
<comment type="subcellular location">
    <subcellularLocation>
        <location evidence="1">Secreted</location>
    </subcellularLocation>
</comment>
<comment type="tissue specificity">
    <text>Expressed by the venom gland.</text>
</comment>
<comment type="similarity">
    <text evidence="3">Belongs to the peptidase S1 family. Snake venom subfamily.</text>
</comment>
<proteinExistence type="evidence at transcript level"/>
<reference key="1">
    <citation type="journal article" date="2007" name="Toxicon">
        <title>Molecular cloning of serine proteases from elapid snake venoms.</title>
        <authorList>
            <person name="Jin Y."/>
            <person name="Lee W.H."/>
            <person name="Zhang Y."/>
        </authorList>
    </citation>
    <scope>NUCLEOTIDE SEQUENCE [MRNA]</scope>
    <source>
        <tissue>Venom gland</tissue>
    </source>
</reference>